<keyword id="KW-1015">Disulfide bond</keyword>
<keyword id="KW-0446">Lipid-binding</keyword>
<keyword id="KW-1185">Reference proteome</keyword>
<keyword id="KW-0732">Signal</keyword>
<keyword id="KW-0813">Transport</keyword>
<reference key="1">
    <citation type="journal article" date="1999" name="Nature">
        <title>Sequence and analysis of chromosome 4 of the plant Arabidopsis thaliana.</title>
        <authorList>
            <person name="Mayer K.F.X."/>
            <person name="Schueller C."/>
            <person name="Wambutt R."/>
            <person name="Murphy G."/>
            <person name="Volckaert G."/>
            <person name="Pohl T."/>
            <person name="Duesterhoeft A."/>
            <person name="Stiekema W."/>
            <person name="Entian K.-D."/>
            <person name="Terryn N."/>
            <person name="Harris B."/>
            <person name="Ansorge W."/>
            <person name="Brandt P."/>
            <person name="Grivell L.A."/>
            <person name="Rieger M."/>
            <person name="Weichselgartner M."/>
            <person name="de Simone V."/>
            <person name="Obermaier B."/>
            <person name="Mache R."/>
            <person name="Mueller M."/>
            <person name="Kreis M."/>
            <person name="Delseny M."/>
            <person name="Puigdomenech P."/>
            <person name="Watson M."/>
            <person name="Schmidtheini T."/>
            <person name="Reichert B."/>
            <person name="Portetelle D."/>
            <person name="Perez-Alonso M."/>
            <person name="Boutry M."/>
            <person name="Bancroft I."/>
            <person name="Vos P."/>
            <person name="Hoheisel J."/>
            <person name="Zimmermann W."/>
            <person name="Wedler H."/>
            <person name="Ridley P."/>
            <person name="Langham S.-A."/>
            <person name="McCullagh B."/>
            <person name="Bilham L."/>
            <person name="Robben J."/>
            <person name="van der Schueren J."/>
            <person name="Grymonprez B."/>
            <person name="Chuang Y.-J."/>
            <person name="Vandenbussche F."/>
            <person name="Braeken M."/>
            <person name="Weltjens I."/>
            <person name="Voet M."/>
            <person name="Bastiaens I."/>
            <person name="Aert R."/>
            <person name="Defoor E."/>
            <person name="Weitzenegger T."/>
            <person name="Bothe G."/>
            <person name="Ramsperger U."/>
            <person name="Hilbert H."/>
            <person name="Braun M."/>
            <person name="Holzer E."/>
            <person name="Brandt A."/>
            <person name="Peters S."/>
            <person name="van Staveren M."/>
            <person name="Dirkse W."/>
            <person name="Mooijman P."/>
            <person name="Klein Lankhorst R."/>
            <person name="Rose M."/>
            <person name="Hauf J."/>
            <person name="Koetter P."/>
            <person name="Berneiser S."/>
            <person name="Hempel S."/>
            <person name="Feldpausch M."/>
            <person name="Lamberth S."/>
            <person name="Van den Daele H."/>
            <person name="De Keyser A."/>
            <person name="Buysshaert C."/>
            <person name="Gielen J."/>
            <person name="Villarroel R."/>
            <person name="De Clercq R."/>
            <person name="van Montagu M."/>
            <person name="Rogers J."/>
            <person name="Cronin A."/>
            <person name="Quail M.A."/>
            <person name="Bray-Allen S."/>
            <person name="Clark L."/>
            <person name="Doggett J."/>
            <person name="Hall S."/>
            <person name="Kay M."/>
            <person name="Lennard N."/>
            <person name="McLay K."/>
            <person name="Mayes R."/>
            <person name="Pettett A."/>
            <person name="Rajandream M.A."/>
            <person name="Lyne M."/>
            <person name="Benes V."/>
            <person name="Rechmann S."/>
            <person name="Borkova D."/>
            <person name="Bloecker H."/>
            <person name="Scharfe M."/>
            <person name="Grimm M."/>
            <person name="Loehnert T.-H."/>
            <person name="Dose S."/>
            <person name="de Haan M."/>
            <person name="Maarse A.C."/>
            <person name="Schaefer M."/>
            <person name="Mueller-Auer S."/>
            <person name="Gabel C."/>
            <person name="Fuchs M."/>
            <person name="Fartmann B."/>
            <person name="Granderath K."/>
            <person name="Dauner D."/>
            <person name="Herzl A."/>
            <person name="Neumann S."/>
            <person name="Argiriou A."/>
            <person name="Vitale D."/>
            <person name="Liguori R."/>
            <person name="Piravandi E."/>
            <person name="Massenet O."/>
            <person name="Quigley F."/>
            <person name="Clabauld G."/>
            <person name="Muendlein A."/>
            <person name="Felber R."/>
            <person name="Schnabl S."/>
            <person name="Hiller R."/>
            <person name="Schmidt W."/>
            <person name="Lecharny A."/>
            <person name="Aubourg S."/>
            <person name="Chefdor F."/>
            <person name="Cooke R."/>
            <person name="Berger C."/>
            <person name="Monfort A."/>
            <person name="Casacuberta E."/>
            <person name="Gibbons T."/>
            <person name="Weber N."/>
            <person name="Vandenbol M."/>
            <person name="Bargues M."/>
            <person name="Terol J."/>
            <person name="Torres A."/>
            <person name="Perez-Perez A."/>
            <person name="Purnelle B."/>
            <person name="Bent E."/>
            <person name="Johnson S."/>
            <person name="Tacon D."/>
            <person name="Jesse T."/>
            <person name="Heijnen L."/>
            <person name="Schwarz S."/>
            <person name="Scholler P."/>
            <person name="Heber S."/>
            <person name="Francs P."/>
            <person name="Bielke C."/>
            <person name="Frishman D."/>
            <person name="Haase D."/>
            <person name="Lemcke K."/>
            <person name="Mewes H.-W."/>
            <person name="Stocker S."/>
            <person name="Zaccaria P."/>
            <person name="Bevan M."/>
            <person name="Wilson R.K."/>
            <person name="de la Bastide M."/>
            <person name="Habermann K."/>
            <person name="Parnell L."/>
            <person name="Dedhia N."/>
            <person name="Gnoj L."/>
            <person name="Schutz K."/>
            <person name="Huang E."/>
            <person name="Spiegel L."/>
            <person name="Sekhon M."/>
            <person name="Murray J."/>
            <person name="Sheet P."/>
            <person name="Cordes M."/>
            <person name="Abu-Threideh J."/>
            <person name="Stoneking T."/>
            <person name="Kalicki J."/>
            <person name="Graves T."/>
            <person name="Harmon G."/>
            <person name="Edwards J."/>
            <person name="Latreille P."/>
            <person name="Courtney L."/>
            <person name="Cloud J."/>
            <person name="Abbott A."/>
            <person name="Scott K."/>
            <person name="Johnson D."/>
            <person name="Minx P."/>
            <person name="Bentley D."/>
            <person name="Fulton B."/>
            <person name="Miller N."/>
            <person name="Greco T."/>
            <person name="Kemp K."/>
            <person name="Kramer J."/>
            <person name="Fulton L."/>
            <person name="Mardis E."/>
            <person name="Dante M."/>
            <person name="Pepin K."/>
            <person name="Hillier L.W."/>
            <person name="Nelson J."/>
            <person name="Spieth J."/>
            <person name="Ryan E."/>
            <person name="Andrews S."/>
            <person name="Geisel C."/>
            <person name="Layman D."/>
            <person name="Du H."/>
            <person name="Ali J."/>
            <person name="Berghoff A."/>
            <person name="Jones K."/>
            <person name="Drone K."/>
            <person name="Cotton M."/>
            <person name="Joshu C."/>
            <person name="Antonoiu B."/>
            <person name="Zidanic M."/>
            <person name="Strong C."/>
            <person name="Sun H."/>
            <person name="Lamar B."/>
            <person name="Yordan C."/>
            <person name="Ma P."/>
            <person name="Zhong J."/>
            <person name="Preston R."/>
            <person name="Vil D."/>
            <person name="Shekher M."/>
            <person name="Matero A."/>
            <person name="Shah R."/>
            <person name="Swaby I.K."/>
            <person name="O'Shaughnessy A."/>
            <person name="Rodriguez M."/>
            <person name="Hoffman J."/>
            <person name="Till S."/>
            <person name="Granat S."/>
            <person name="Shohdy N."/>
            <person name="Hasegawa A."/>
            <person name="Hameed A."/>
            <person name="Lodhi M."/>
            <person name="Johnson A."/>
            <person name="Chen E."/>
            <person name="Marra M.A."/>
            <person name="Martienssen R."/>
            <person name="McCombie W.R."/>
        </authorList>
    </citation>
    <scope>NUCLEOTIDE SEQUENCE [LARGE SCALE GENOMIC DNA]</scope>
    <source>
        <strain>cv. Columbia</strain>
    </source>
</reference>
<reference key="2">
    <citation type="journal article" date="2017" name="Plant J.">
        <title>Araport11: a complete reannotation of the Arabidopsis thaliana reference genome.</title>
        <authorList>
            <person name="Cheng C.Y."/>
            <person name="Krishnakumar V."/>
            <person name="Chan A.P."/>
            <person name="Thibaud-Nissen F."/>
            <person name="Schobel S."/>
            <person name="Town C.D."/>
        </authorList>
    </citation>
    <scope>GENOME REANNOTATION</scope>
    <source>
        <strain>cv. Columbia</strain>
    </source>
</reference>
<reference key="3">
    <citation type="journal article" date="2004" name="Genome Res.">
        <title>Whole genome sequence comparisons and 'full-length' cDNA sequences: a combined approach to evaluate and improve Arabidopsis genome annotation.</title>
        <authorList>
            <person name="Castelli V."/>
            <person name="Aury J.-M."/>
            <person name="Jaillon O."/>
            <person name="Wincker P."/>
            <person name="Clepet C."/>
            <person name="Menard M."/>
            <person name="Cruaud C."/>
            <person name="Quetier F."/>
            <person name="Scarpelli C."/>
            <person name="Schaechter V."/>
            <person name="Temple G."/>
            <person name="Caboche M."/>
            <person name="Weissenbach J."/>
            <person name="Salanoubat M."/>
        </authorList>
    </citation>
    <scope>NUCLEOTIDE SEQUENCE [LARGE SCALE MRNA] OF 2-126</scope>
    <source>
        <strain>cv. Columbia</strain>
    </source>
</reference>
<reference key="4">
    <citation type="submission" date="2004-09" db="EMBL/GenBank/DDBJ databases">
        <title>Arabidopsis ORF clones.</title>
        <authorList>
            <person name="Cheuk R.F."/>
            <person name="Chen H."/>
            <person name="Kim C.J."/>
            <person name="Shinn P."/>
            <person name="Ecker J.R."/>
        </authorList>
    </citation>
    <scope>NUCLEOTIDE SEQUENCE [LARGE SCALE MRNA] OF 11-126</scope>
    <source>
        <strain>cv. Columbia</strain>
    </source>
</reference>
<reference key="5">
    <citation type="journal article" date="2008" name="Plant Physiol. Biochem.">
        <title>Plant pathogenesis-related (PR) proteins: a focus on PR peptides.</title>
        <authorList>
            <person name="Sels J."/>
            <person name="Mathys J."/>
            <person name="De Coninck B.M.A."/>
            <person name="Cammue B.P.A."/>
            <person name="De Bolle M.F.C."/>
        </authorList>
    </citation>
    <scope>GENE FAMILY</scope>
    <scope>NOMENCLATURE</scope>
</reference>
<accession>Q9M0T1</accession>
<accession>F4JIA5</accession>
<accession>Q6AWW3</accession>
<organism>
    <name type="scientific">Arabidopsis thaliana</name>
    <name type="common">Mouse-ear cress</name>
    <dbReference type="NCBI Taxonomy" id="3702"/>
    <lineage>
        <taxon>Eukaryota</taxon>
        <taxon>Viridiplantae</taxon>
        <taxon>Streptophyta</taxon>
        <taxon>Embryophyta</taxon>
        <taxon>Tracheophyta</taxon>
        <taxon>Spermatophyta</taxon>
        <taxon>Magnoliopsida</taxon>
        <taxon>eudicotyledons</taxon>
        <taxon>Gunneridae</taxon>
        <taxon>Pentapetalae</taxon>
        <taxon>rosids</taxon>
        <taxon>malvids</taxon>
        <taxon>Brassicales</taxon>
        <taxon>Brassicaceae</taxon>
        <taxon>Camelineae</taxon>
        <taxon>Arabidopsis</taxon>
    </lineage>
</organism>
<sequence>MSKSIFVVCITLLVVLSPTLNAKMVTYPNGDRHCVMAQGQVISACLQQANGLPHADCCYAINDVNRYVETIYGRLALCKCFQEILKDSRFTKLIGMPEKCAIPNAVPFDPKTDCDRFVEHIWLKMF</sequence>
<protein>
    <recommendedName>
        <fullName>Non-specific lipid-transfer protein 15</fullName>
        <shortName>LTP 15</shortName>
    </recommendedName>
</protein>
<gene>
    <name type="primary">LTP15</name>
    <name type="ordered locus">At4g08530</name>
    <name type="ORF">T15F16.16</name>
</gene>
<dbReference type="EMBL" id="AL161511">
    <property type="protein sequence ID" value="CAB77978.1"/>
    <property type="molecule type" value="Genomic_DNA"/>
</dbReference>
<dbReference type="EMBL" id="CP002687">
    <property type="protein sequence ID" value="AEE82654.2"/>
    <property type="molecule type" value="Genomic_DNA"/>
</dbReference>
<dbReference type="EMBL" id="BX828725">
    <property type="status" value="NOT_ANNOTATED_CDS"/>
    <property type="molecule type" value="mRNA"/>
</dbReference>
<dbReference type="EMBL" id="BT015135">
    <property type="protein sequence ID" value="AAT85731.1"/>
    <property type="status" value="ALT_INIT"/>
    <property type="molecule type" value="mRNA"/>
</dbReference>
<dbReference type="EMBL" id="BT015644">
    <property type="protein sequence ID" value="AAU15143.1"/>
    <property type="molecule type" value="mRNA"/>
</dbReference>
<dbReference type="PIR" id="B85085">
    <property type="entry name" value="B85085"/>
</dbReference>
<dbReference type="RefSeq" id="NP_192593.3">
    <property type="nucleotide sequence ID" value="NM_116922.4"/>
</dbReference>
<dbReference type="SMR" id="Q9M0T1"/>
<dbReference type="STRING" id="3702.Q9M0T1"/>
<dbReference type="PaxDb" id="3702-AT4G08530.1"/>
<dbReference type="EnsemblPlants" id="AT4G08530.1">
    <property type="protein sequence ID" value="AT4G08530.1"/>
    <property type="gene ID" value="AT4G08530"/>
</dbReference>
<dbReference type="GeneID" id="826412"/>
<dbReference type="Gramene" id="AT4G08530.1">
    <property type="protein sequence ID" value="AT4G08530.1"/>
    <property type="gene ID" value="AT4G08530"/>
</dbReference>
<dbReference type="KEGG" id="ath:AT4G08530"/>
<dbReference type="Araport" id="AT4G08530"/>
<dbReference type="TAIR" id="AT4G08530"/>
<dbReference type="HOGENOM" id="CLU_169897_0_0_1"/>
<dbReference type="InParanoid" id="Q9M0T1"/>
<dbReference type="OMA" id="DCCYAIN"/>
<dbReference type="PhylomeDB" id="Q9M0T1"/>
<dbReference type="PRO" id="PR:Q9M0T1"/>
<dbReference type="Proteomes" id="UP000006548">
    <property type="component" value="Chromosome 4"/>
</dbReference>
<dbReference type="ExpressionAtlas" id="Q9M0T1">
    <property type="expression patterns" value="baseline and differential"/>
</dbReference>
<dbReference type="GO" id="GO:0008289">
    <property type="term" value="F:lipid binding"/>
    <property type="evidence" value="ECO:0007669"/>
    <property type="project" value="UniProtKB-KW"/>
</dbReference>
<dbReference type="CDD" id="cd01960">
    <property type="entry name" value="nsLTP1"/>
    <property type="match status" value="1"/>
</dbReference>
<dbReference type="Gene3D" id="1.10.110.10">
    <property type="entry name" value="Plant lipid-transfer and hydrophobic proteins"/>
    <property type="match status" value="1"/>
</dbReference>
<dbReference type="InterPro" id="IPR036312">
    <property type="entry name" value="Bifun_inhib/LTP/seed_sf"/>
</dbReference>
<dbReference type="SUPFAM" id="SSF47699">
    <property type="entry name" value="Bifunctional inhibitor/lipid-transfer protein/seed storage 2S albumin"/>
    <property type="match status" value="1"/>
</dbReference>
<feature type="signal peptide" evidence="2">
    <location>
        <begin position="1"/>
        <end position="22"/>
    </location>
</feature>
<feature type="chain" id="PRO_0000355620" description="Non-specific lipid-transfer protein 15">
    <location>
        <begin position="23"/>
        <end position="126"/>
    </location>
</feature>
<feature type="disulfide bond" evidence="2">
    <location>
        <begin position="34"/>
        <end position="80"/>
    </location>
</feature>
<feature type="disulfide bond" evidence="2">
    <location>
        <begin position="45"/>
        <end position="57"/>
    </location>
</feature>
<feature type="disulfide bond" evidence="2">
    <location>
        <begin position="58"/>
        <end position="100"/>
    </location>
</feature>
<feature type="disulfide bond" evidence="2">
    <location>
        <begin position="78"/>
        <end position="114"/>
    </location>
</feature>
<feature type="sequence conflict" description="In Ref. 3; BX828725." evidence="3" ref="3">
    <original>D</original>
    <variation>E</variation>
    <location>
        <position position="115"/>
    </location>
</feature>
<proteinExistence type="evidence at transcript level"/>
<comment type="function">
    <text evidence="1">Plant non-specific lipid-transfer proteins transfer phospholipids as well as galactolipids across membranes. May play a role in wax or cutin deposition in the cell walls of expanding epidermal cells and certain secretory tissues (By similarity).</text>
</comment>
<comment type="similarity">
    <text evidence="3">Belongs to the plant LTP family.</text>
</comment>
<comment type="sequence caution" evidence="3">
    <conflict type="erroneous initiation">
        <sequence resource="EMBL-CDS" id="AAT85731"/>
    </conflict>
    <text>Truncated N-terminus.</text>
</comment>
<evidence type="ECO:0000250" key="1"/>
<evidence type="ECO:0000255" key="2"/>
<evidence type="ECO:0000305" key="3"/>
<name>NLTPF_ARATH</name>